<proteinExistence type="inferred from homology"/>
<feature type="chain" id="PRO_0000177150" description="Large ribosomal subunit protein bL20">
    <location>
        <begin position="1"/>
        <end position="128"/>
    </location>
</feature>
<accession>Q8FTQ0</accession>
<reference key="1">
    <citation type="journal article" date="2003" name="Genome Res.">
        <title>Comparative complete genome sequence analysis of the amino acid replacements responsible for the thermostability of Corynebacterium efficiens.</title>
        <authorList>
            <person name="Nishio Y."/>
            <person name="Nakamura Y."/>
            <person name="Kawarabayasi Y."/>
            <person name="Usuda Y."/>
            <person name="Kimura E."/>
            <person name="Sugimoto S."/>
            <person name="Matsui K."/>
            <person name="Yamagishi A."/>
            <person name="Kikuchi H."/>
            <person name="Ikeo K."/>
            <person name="Gojobori T."/>
        </authorList>
    </citation>
    <scope>NUCLEOTIDE SEQUENCE [LARGE SCALE GENOMIC DNA]</scope>
    <source>
        <strain>DSM 44549 / YS-314 / AJ 12310 / JCM 11189 / NBRC 100395</strain>
    </source>
</reference>
<keyword id="KW-1185">Reference proteome</keyword>
<keyword id="KW-0687">Ribonucleoprotein</keyword>
<keyword id="KW-0689">Ribosomal protein</keyword>
<keyword id="KW-0694">RNA-binding</keyword>
<keyword id="KW-0699">rRNA-binding</keyword>
<name>RL20_COREF</name>
<protein>
    <recommendedName>
        <fullName evidence="1">Large ribosomal subunit protein bL20</fullName>
    </recommendedName>
    <alternativeName>
        <fullName evidence="2">50S ribosomal protein L20</fullName>
    </alternativeName>
</protein>
<organism>
    <name type="scientific">Corynebacterium efficiens (strain DSM 44549 / YS-314 / AJ 12310 / JCM 11189 / NBRC 100395)</name>
    <dbReference type="NCBI Taxonomy" id="196164"/>
    <lineage>
        <taxon>Bacteria</taxon>
        <taxon>Bacillati</taxon>
        <taxon>Actinomycetota</taxon>
        <taxon>Actinomycetes</taxon>
        <taxon>Mycobacteriales</taxon>
        <taxon>Corynebacteriaceae</taxon>
        <taxon>Corynebacterium</taxon>
    </lineage>
</organism>
<gene>
    <name evidence="1" type="primary">rplT</name>
    <name type="ordered locus">CE1511</name>
</gene>
<comment type="function">
    <text evidence="1">Binds directly to 23S ribosomal RNA and is necessary for the in vitro assembly process of the 50S ribosomal subunit. It is not involved in the protein synthesizing functions of that subunit.</text>
</comment>
<comment type="similarity">
    <text evidence="1">Belongs to the bacterial ribosomal protein bL20 family.</text>
</comment>
<sequence>MARVKRSVNAKKKRREILKSAKGYRGQRSRLYRKAKEQWLHSMTYAYRDRRARKGEFRKLWIQRINAAARMNGITYNRLIQGLRLAEIEVDRKILADLAVNDFAAFSAICEAAKAALPEDVNAPKAAA</sequence>
<dbReference type="EMBL" id="BA000035">
    <property type="protein sequence ID" value="BAC18321.1"/>
    <property type="molecule type" value="Genomic_DNA"/>
</dbReference>
<dbReference type="RefSeq" id="WP_006770418.1">
    <property type="nucleotide sequence ID" value="NZ_GG700691.1"/>
</dbReference>
<dbReference type="SMR" id="Q8FTQ0"/>
<dbReference type="STRING" id="196164.gene:10741926"/>
<dbReference type="KEGG" id="cef:CE1511"/>
<dbReference type="eggNOG" id="COG0292">
    <property type="taxonomic scope" value="Bacteria"/>
</dbReference>
<dbReference type="HOGENOM" id="CLU_123265_0_0_11"/>
<dbReference type="OrthoDB" id="9808966at2"/>
<dbReference type="Proteomes" id="UP000001409">
    <property type="component" value="Chromosome"/>
</dbReference>
<dbReference type="GO" id="GO:1990904">
    <property type="term" value="C:ribonucleoprotein complex"/>
    <property type="evidence" value="ECO:0007669"/>
    <property type="project" value="UniProtKB-KW"/>
</dbReference>
<dbReference type="GO" id="GO:0005840">
    <property type="term" value="C:ribosome"/>
    <property type="evidence" value="ECO:0007669"/>
    <property type="project" value="UniProtKB-KW"/>
</dbReference>
<dbReference type="GO" id="GO:0019843">
    <property type="term" value="F:rRNA binding"/>
    <property type="evidence" value="ECO:0007669"/>
    <property type="project" value="UniProtKB-UniRule"/>
</dbReference>
<dbReference type="GO" id="GO:0003735">
    <property type="term" value="F:structural constituent of ribosome"/>
    <property type="evidence" value="ECO:0007669"/>
    <property type="project" value="InterPro"/>
</dbReference>
<dbReference type="GO" id="GO:0000027">
    <property type="term" value="P:ribosomal large subunit assembly"/>
    <property type="evidence" value="ECO:0007669"/>
    <property type="project" value="UniProtKB-UniRule"/>
</dbReference>
<dbReference type="GO" id="GO:0006412">
    <property type="term" value="P:translation"/>
    <property type="evidence" value="ECO:0007669"/>
    <property type="project" value="InterPro"/>
</dbReference>
<dbReference type="CDD" id="cd07026">
    <property type="entry name" value="Ribosomal_L20"/>
    <property type="match status" value="1"/>
</dbReference>
<dbReference type="FunFam" id="1.10.1900.20:FF:000001">
    <property type="entry name" value="50S ribosomal protein L20"/>
    <property type="match status" value="1"/>
</dbReference>
<dbReference type="Gene3D" id="6.10.160.10">
    <property type="match status" value="1"/>
</dbReference>
<dbReference type="Gene3D" id="1.10.1900.20">
    <property type="entry name" value="Ribosomal protein L20"/>
    <property type="match status" value="1"/>
</dbReference>
<dbReference type="HAMAP" id="MF_00382">
    <property type="entry name" value="Ribosomal_bL20"/>
    <property type="match status" value="1"/>
</dbReference>
<dbReference type="InterPro" id="IPR005813">
    <property type="entry name" value="Ribosomal_bL20"/>
</dbReference>
<dbReference type="InterPro" id="IPR049946">
    <property type="entry name" value="RIBOSOMAL_L20_CS"/>
</dbReference>
<dbReference type="InterPro" id="IPR035566">
    <property type="entry name" value="Ribosomal_protein_bL20_C"/>
</dbReference>
<dbReference type="NCBIfam" id="TIGR01032">
    <property type="entry name" value="rplT_bact"/>
    <property type="match status" value="1"/>
</dbReference>
<dbReference type="PANTHER" id="PTHR10986">
    <property type="entry name" value="39S RIBOSOMAL PROTEIN L20"/>
    <property type="match status" value="1"/>
</dbReference>
<dbReference type="Pfam" id="PF00453">
    <property type="entry name" value="Ribosomal_L20"/>
    <property type="match status" value="1"/>
</dbReference>
<dbReference type="PRINTS" id="PR00062">
    <property type="entry name" value="RIBOSOMALL20"/>
</dbReference>
<dbReference type="SUPFAM" id="SSF74731">
    <property type="entry name" value="Ribosomal protein L20"/>
    <property type="match status" value="1"/>
</dbReference>
<dbReference type="PROSITE" id="PS00937">
    <property type="entry name" value="RIBOSOMAL_L20"/>
    <property type="match status" value="1"/>
</dbReference>
<evidence type="ECO:0000255" key="1">
    <source>
        <dbReference type="HAMAP-Rule" id="MF_00382"/>
    </source>
</evidence>
<evidence type="ECO:0000305" key="2"/>